<reference key="1">
    <citation type="journal article" date="2001" name="Proc. Natl. Acad. Sci. U.S.A.">
        <title>Complete genome sequence of Caulobacter crescentus.</title>
        <authorList>
            <person name="Nierman W.C."/>
            <person name="Feldblyum T.V."/>
            <person name="Laub M.T."/>
            <person name="Paulsen I.T."/>
            <person name="Nelson K.E."/>
            <person name="Eisen J.A."/>
            <person name="Heidelberg J.F."/>
            <person name="Alley M.R.K."/>
            <person name="Ohta N."/>
            <person name="Maddock J.R."/>
            <person name="Potocka I."/>
            <person name="Nelson W.C."/>
            <person name="Newton A."/>
            <person name="Stephens C."/>
            <person name="Phadke N.D."/>
            <person name="Ely B."/>
            <person name="DeBoy R.T."/>
            <person name="Dodson R.J."/>
            <person name="Durkin A.S."/>
            <person name="Gwinn M.L."/>
            <person name="Haft D.H."/>
            <person name="Kolonay J.F."/>
            <person name="Smit J."/>
            <person name="Craven M.B."/>
            <person name="Khouri H.M."/>
            <person name="Shetty J."/>
            <person name="Berry K.J."/>
            <person name="Utterback T.R."/>
            <person name="Tran K."/>
            <person name="Wolf A.M."/>
            <person name="Vamathevan J.J."/>
            <person name="Ermolaeva M.D."/>
            <person name="White O."/>
            <person name="Salzberg S.L."/>
            <person name="Venter J.C."/>
            <person name="Shapiro L."/>
            <person name="Fraser C.M."/>
        </authorList>
    </citation>
    <scope>NUCLEOTIDE SEQUENCE [LARGE SCALE GENOMIC DNA]</scope>
    <source>
        <strain>ATCC 19089 / CIP 103742 / CB 15</strain>
    </source>
</reference>
<feature type="chain" id="PRO_0000210348" description="Glucans biosynthesis glucosyltransferase H">
    <location>
        <begin position="1"/>
        <end position="663"/>
    </location>
</feature>
<feature type="transmembrane region" description="Helical" evidence="1">
    <location>
        <begin position="64"/>
        <end position="86"/>
    </location>
</feature>
<feature type="transmembrane region" description="Helical" evidence="1">
    <location>
        <begin position="101"/>
        <end position="123"/>
    </location>
</feature>
<feature type="transmembrane region" description="Helical" evidence="1">
    <location>
        <begin position="413"/>
        <end position="435"/>
    </location>
</feature>
<feature type="transmembrane region" description="Helical" evidence="1">
    <location>
        <begin position="470"/>
        <end position="492"/>
    </location>
</feature>
<feature type="transmembrane region" description="Helical" evidence="1">
    <location>
        <begin position="558"/>
        <end position="580"/>
    </location>
</feature>
<feature type="transmembrane region" description="Helical" evidence="1">
    <location>
        <begin position="584"/>
        <end position="606"/>
    </location>
</feature>
<protein>
    <recommendedName>
        <fullName evidence="1">Glucans biosynthesis glucosyltransferase H</fullName>
        <ecNumber evidence="1">2.4.1.-</ecNumber>
    </recommendedName>
</protein>
<name>OPGH_CAUVC</name>
<dbReference type="EC" id="2.4.1.-" evidence="1"/>
<dbReference type="EMBL" id="AE005673">
    <property type="protein sequence ID" value="AAK23993.1"/>
    <property type="molecule type" value="Genomic_DNA"/>
</dbReference>
<dbReference type="PIR" id="E87499">
    <property type="entry name" value="E87499"/>
</dbReference>
<dbReference type="RefSeq" id="NP_420825.1">
    <property type="nucleotide sequence ID" value="NC_002696.2"/>
</dbReference>
<dbReference type="RefSeq" id="WP_010919884.1">
    <property type="nucleotide sequence ID" value="NC_002696.2"/>
</dbReference>
<dbReference type="STRING" id="190650.CC_2018"/>
<dbReference type="CAZy" id="GT2">
    <property type="family name" value="Glycosyltransferase Family 2"/>
</dbReference>
<dbReference type="EnsemblBacteria" id="AAK23993">
    <property type="protein sequence ID" value="AAK23993"/>
    <property type="gene ID" value="CC_2018"/>
</dbReference>
<dbReference type="KEGG" id="ccr:CC_2018"/>
<dbReference type="PATRIC" id="fig|190650.5.peg.2038"/>
<dbReference type="eggNOG" id="COG2943">
    <property type="taxonomic scope" value="Bacteria"/>
</dbReference>
<dbReference type="HOGENOM" id="CLU_015730_1_0_5"/>
<dbReference type="BioCyc" id="CAULO:CC2018-MONOMER"/>
<dbReference type="UniPathway" id="UPA00637"/>
<dbReference type="Proteomes" id="UP000001816">
    <property type="component" value="Chromosome"/>
</dbReference>
<dbReference type="GO" id="GO:0005886">
    <property type="term" value="C:plasma membrane"/>
    <property type="evidence" value="ECO:0007669"/>
    <property type="project" value="UniProtKB-SubCell"/>
</dbReference>
<dbReference type="GO" id="GO:0016758">
    <property type="term" value="F:hexosyltransferase activity"/>
    <property type="evidence" value="ECO:0007669"/>
    <property type="project" value="UniProtKB-UniRule"/>
</dbReference>
<dbReference type="GO" id="GO:0009250">
    <property type="term" value="P:glucan biosynthetic process"/>
    <property type="evidence" value="ECO:0007669"/>
    <property type="project" value="UniProtKB-UniRule"/>
</dbReference>
<dbReference type="CDD" id="cd04191">
    <property type="entry name" value="Glucan_BSP_MdoH"/>
    <property type="match status" value="1"/>
</dbReference>
<dbReference type="Gene3D" id="3.90.550.10">
    <property type="entry name" value="Spore Coat Polysaccharide Biosynthesis Protein SpsA, Chain A"/>
    <property type="match status" value="1"/>
</dbReference>
<dbReference type="HAMAP" id="MF_01072">
    <property type="entry name" value="MdoH_OpgH"/>
    <property type="match status" value="1"/>
</dbReference>
<dbReference type="InterPro" id="IPR023725">
    <property type="entry name" value="Glucans_biosynth_gluTrFase_H"/>
</dbReference>
<dbReference type="InterPro" id="IPR001173">
    <property type="entry name" value="Glyco_trans_2-like"/>
</dbReference>
<dbReference type="InterPro" id="IPR050321">
    <property type="entry name" value="Glycosyltr_2/OpgH_subfam"/>
</dbReference>
<dbReference type="InterPro" id="IPR029044">
    <property type="entry name" value="Nucleotide-diphossugar_trans"/>
</dbReference>
<dbReference type="NCBIfam" id="NF003958">
    <property type="entry name" value="PRK05454.2-1"/>
    <property type="match status" value="1"/>
</dbReference>
<dbReference type="NCBIfam" id="NF003962">
    <property type="entry name" value="PRK05454.2-5"/>
    <property type="match status" value="1"/>
</dbReference>
<dbReference type="PANTHER" id="PTHR43867">
    <property type="entry name" value="CELLULOSE SYNTHASE CATALYTIC SUBUNIT A [UDP-FORMING]"/>
    <property type="match status" value="1"/>
</dbReference>
<dbReference type="PANTHER" id="PTHR43867:SF5">
    <property type="entry name" value="GLUCANS BIOSYNTHESIS GLUCOSYLTRANSFERASE H"/>
    <property type="match status" value="1"/>
</dbReference>
<dbReference type="Pfam" id="PF13632">
    <property type="entry name" value="Glyco_trans_2_3"/>
    <property type="match status" value="1"/>
</dbReference>
<dbReference type="SUPFAM" id="SSF53448">
    <property type="entry name" value="Nucleotide-diphospho-sugar transferases"/>
    <property type="match status" value="1"/>
</dbReference>
<keyword id="KW-0997">Cell inner membrane</keyword>
<keyword id="KW-1003">Cell membrane</keyword>
<keyword id="KW-0328">Glycosyltransferase</keyword>
<keyword id="KW-0472">Membrane</keyword>
<keyword id="KW-1185">Reference proteome</keyword>
<keyword id="KW-0808">Transferase</keyword>
<keyword id="KW-0812">Transmembrane</keyword>
<keyword id="KW-1133">Transmembrane helix</keyword>
<comment type="function">
    <text evidence="1">Involved in the biosynthesis of osmoregulated periplasmic glucans (OPGs).</text>
</comment>
<comment type="pathway">
    <text evidence="1">Glycan metabolism; osmoregulated periplasmic glucan (OPG) biosynthesis.</text>
</comment>
<comment type="subcellular location">
    <subcellularLocation>
        <location evidence="1">Cell inner membrane</location>
        <topology evidence="1">Multi-pass membrane protein</topology>
    </subcellularLocation>
</comment>
<comment type="similarity">
    <text evidence="1">Belongs to the glycosyltransferase 2 family. OpgH subfamily.</text>
</comment>
<proteinExistence type="inferred from homology"/>
<accession>Q9A6R5</accession>
<gene>
    <name evidence="1" type="primary">opgH</name>
    <name type="ordered locus">CC_2018</name>
</gene>
<organism>
    <name type="scientific">Caulobacter vibrioides (strain ATCC 19089 / CIP 103742 / CB 15)</name>
    <name type="common">Caulobacter crescentus</name>
    <dbReference type="NCBI Taxonomy" id="190650"/>
    <lineage>
        <taxon>Bacteria</taxon>
        <taxon>Pseudomonadati</taxon>
        <taxon>Pseudomonadota</taxon>
        <taxon>Alphaproteobacteria</taxon>
        <taxon>Caulobacterales</taxon>
        <taxon>Caulobacteraceae</taxon>
        <taxon>Caulobacter</taxon>
    </lineage>
</organism>
<sequence>MSDRSSLFDVRSSTSVTLDQVVRRDTVEIPDEAALAMPVQPLSFWQGGARRATALTQDMNLRRWMLGLMTIAMGVAGWKASFDTIALGGVTRLEAVVLTLLAPLFLALSLWFCTALIGFVVLMGRPKDPLGIDSEAPMPKLHTRTAILMPVYNEDAAAVFARLRAMDASIAETGSARNFDIFVISDTRDAQVALAEQACFARFRREANCNVYYRIRKENTGRKAGNVADWVSRWGSAYEHMLVLDADSLMTGEAMVRLADAMERHPGAGLIQTMPMIINGQTIFARTLQFATRLYGRVAWTGLAWWSGSESSFWGHNAIVRTRAFAETCGLPHLPGPKPFGGEVMSHDALESALLRRGGWSVHLAPYLDGSYEESPSNLLDFATRDRRWCRGNIQHVPLIALPGLHWMSRMHLVIGVLSYALSPLWFFCLSAGLISRALMPELKKAAFTMADLKAAAHALIDWSEIQATAWAMIITFVLLFGPKILGAILVLARKGEVKGFGGKRRMAAGLGVEMLLSALVAPMLMFTQTRAIVEILAGKVGGWAAQRRDADKVDFKEAWAAMGWISLSGLILAASFWFTPDLLTATAPILAGLVLAVPLTMLGAHKVAGLKLKANGLFMTPEERRPPAIVRAAVGAACEPPIRWFARNGRPIGPTTKIRDAA</sequence>
<evidence type="ECO:0000255" key="1">
    <source>
        <dbReference type="HAMAP-Rule" id="MF_01072"/>
    </source>
</evidence>